<accession>B5XV18</accession>
<sequence length="545" mass="60205">MTTNYIFVTGGVVSSLGKGIAAASLAAILEARGLNVTIMKLDPYINVDPGTMSPIQHGEVFVTEDGAETDLDLGHYERFIRTKMTRRNNFTTGRIYSDVLRKERRGDYLGATVQVIPHITNAIKERVLAGGEGHDVVLVEIGGTVGDIESLPFLEAIRQMAVEIGREHTLFMHLTLVPYMAAAGEVKTKPTQHSVKELLSIGIQPDILICRSDRAVPANERAKIALFCNVPEKAVISLKDVDSIYKIPGLLKSQGLDDYICKRFSLTCPEANLAEWEQVIYEEANPAGEVTIGMVGKYIELPDAYKSVIEALKHGGLKNRVTVNIKLIDSQDVETRGVEILKDLDAILIPGGFGYRGVEGKIATARYARENNIPYLGICLGMQVALIEFARNVAGMENANSTEFVPDCKYPVVALITEWRDEDGNVEVRSEKSDLGGTMRLGAQQCQLDDESLVRQLYGEPTITERHRHRYEVNNMLLKPIEAAGLRVAGRSGDDQLVEIIEVPNHPWFVACQFHPEFTSTPRDGHPLFAGFVKAASEYQKRQAK</sequence>
<comment type="function">
    <text evidence="1">Catalyzes the ATP-dependent amination of UTP to CTP with either L-glutamine or ammonia as the source of nitrogen. Regulates intracellular CTP levels through interactions with the four ribonucleotide triphosphates.</text>
</comment>
<comment type="catalytic activity">
    <reaction evidence="1">
        <text>UTP + L-glutamine + ATP + H2O = CTP + L-glutamate + ADP + phosphate + 2 H(+)</text>
        <dbReference type="Rhea" id="RHEA:26426"/>
        <dbReference type="ChEBI" id="CHEBI:15377"/>
        <dbReference type="ChEBI" id="CHEBI:15378"/>
        <dbReference type="ChEBI" id="CHEBI:29985"/>
        <dbReference type="ChEBI" id="CHEBI:30616"/>
        <dbReference type="ChEBI" id="CHEBI:37563"/>
        <dbReference type="ChEBI" id="CHEBI:43474"/>
        <dbReference type="ChEBI" id="CHEBI:46398"/>
        <dbReference type="ChEBI" id="CHEBI:58359"/>
        <dbReference type="ChEBI" id="CHEBI:456216"/>
        <dbReference type="EC" id="6.3.4.2"/>
    </reaction>
</comment>
<comment type="catalytic activity">
    <reaction evidence="1">
        <text>L-glutamine + H2O = L-glutamate + NH4(+)</text>
        <dbReference type="Rhea" id="RHEA:15889"/>
        <dbReference type="ChEBI" id="CHEBI:15377"/>
        <dbReference type="ChEBI" id="CHEBI:28938"/>
        <dbReference type="ChEBI" id="CHEBI:29985"/>
        <dbReference type="ChEBI" id="CHEBI:58359"/>
    </reaction>
</comment>
<comment type="catalytic activity">
    <reaction evidence="1">
        <text>UTP + NH4(+) + ATP = CTP + ADP + phosphate + 2 H(+)</text>
        <dbReference type="Rhea" id="RHEA:16597"/>
        <dbReference type="ChEBI" id="CHEBI:15378"/>
        <dbReference type="ChEBI" id="CHEBI:28938"/>
        <dbReference type="ChEBI" id="CHEBI:30616"/>
        <dbReference type="ChEBI" id="CHEBI:37563"/>
        <dbReference type="ChEBI" id="CHEBI:43474"/>
        <dbReference type="ChEBI" id="CHEBI:46398"/>
        <dbReference type="ChEBI" id="CHEBI:456216"/>
    </reaction>
</comment>
<comment type="activity regulation">
    <text evidence="1">Allosterically activated by GTP, when glutamine is the substrate; GTP has no effect on the reaction when ammonia is the substrate. The allosteric effector GTP functions by stabilizing the protein conformation that binds the tetrahedral intermediate(s) formed during glutamine hydrolysis. Inhibited by the product CTP, via allosteric rather than competitive inhibition.</text>
</comment>
<comment type="pathway">
    <text evidence="1">Pyrimidine metabolism; CTP biosynthesis via de novo pathway; CTP from UDP: step 2/2.</text>
</comment>
<comment type="subunit">
    <text evidence="1">Homotetramer.</text>
</comment>
<comment type="miscellaneous">
    <text evidence="1">CTPSs have evolved a hybrid strategy for distinguishing between UTP and CTP. The overlapping regions of the product feedback inhibitory and substrate sites recognize a common feature in both compounds, the triphosphate moiety. To differentiate isosteric substrate and product pyrimidine rings, an additional pocket far from the expected kinase/ligase catalytic site, specifically recognizes the cytosine and ribose portions of the product inhibitor.</text>
</comment>
<comment type="similarity">
    <text evidence="1">Belongs to the CTP synthase family.</text>
</comment>
<name>PYRG_KLEP3</name>
<protein>
    <recommendedName>
        <fullName evidence="1">CTP synthase</fullName>
        <ecNumber evidence="1">6.3.4.2</ecNumber>
    </recommendedName>
    <alternativeName>
        <fullName evidence="1">Cytidine 5'-triphosphate synthase</fullName>
    </alternativeName>
    <alternativeName>
        <fullName evidence="1">Cytidine triphosphate synthetase</fullName>
        <shortName evidence="1">CTP synthetase</shortName>
        <shortName evidence="1">CTPS</shortName>
    </alternativeName>
    <alternativeName>
        <fullName evidence="1">UTP--ammonia ligase</fullName>
    </alternativeName>
</protein>
<keyword id="KW-0067">ATP-binding</keyword>
<keyword id="KW-0315">Glutamine amidotransferase</keyword>
<keyword id="KW-0436">Ligase</keyword>
<keyword id="KW-0460">Magnesium</keyword>
<keyword id="KW-0479">Metal-binding</keyword>
<keyword id="KW-0547">Nucleotide-binding</keyword>
<keyword id="KW-0665">Pyrimidine biosynthesis</keyword>
<gene>
    <name evidence="1" type="primary">pyrG</name>
    <name type="ordered locus">KPK_0998</name>
</gene>
<feature type="chain" id="PRO_1000139475" description="CTP synthase">
    <location>
        <begin position="1"/>
        <end position="545"/>
    </location>
</feature>
<feature type="domain" description="Glutamine amidotransferase type-1" evidence="1">
    <location>
        <begin position="291"/>
        <end position="542"/>
    </location>
</feature>
<feature type="region of interest" description="Amidoligase domain" evidence="1">
    <location>
        <begin position="1"/>
        <end position="266"/>
    </location>
</feature>
<feature type="active site" description="Nucleophile; for glutamine hydrolysis" evidence="1">
    <location>
        <position position="379"/>
    </location>
</feature>
<feature type="active site" evidence="1">
    <location>
        <position position="515"/>
    </location>
</feature>
<feature type="active site" evidence="1">
    <location>
        <position position="517"/>
    </location>
</feature>
<feature type="binding site" evidence="1">
    <location>
        <position position="14"/>
    </location>
    <ligand>
        <name>CTP</name>
        <dbReference type="ChEBI" id="CHEBI:37563"/>
        <note>allosteric inhibitor</note>
    </ligand>
</feature>
<feature type="binding site" evidence="1">
    <location>
        <position position="14"/>
    </location>
    <ligand>
        <name>UTP</name>
        <dbReference type="ChEBI" id="CHEBI:46398"/>
    </ligand>
</feature>
<feature type="binding site" evidence="1">
    <location>
        <begin position="15"/>
        <end position="20"/>
    </location>
    <ligand>
        <name>ATP</name>
        <dbReference type="ChEBI" id="CHEBI:30616"/>
    </ligand>
</feature>
<feature type="binding site" evidence="1">
    <location>
        <position position="72"/>
    </location>
    <ligand>
        <name>ATP</name>
        <dbReference type="ChEBI" id="CHEBI:30616"/>
    </ligand>
</feature>
<feature type="binding site" evidence="1">
    <location>
        <position position="72"/>
    </location>
    <ligand>
        <name>Mg(2+)</name>
        <dbReference type="ChEBI" id="CHEBI:18420"/>
    </ligand>
</feature>
<feature type="binding site" evidence="1">
    <location>
        <position position="140"/>
    </location>
    <ligand>
        <name>Mg(2+)</name>
        <dbReference type="ChEBI" id="CHEBI:18420"/>
    </ligand>
</feature>
<feature type="binding site" evidence="1">
    <location>
        <begin position="147"/>
        <end position="149"/>
    </location>
    <ligand>
        <name>CTP</name>
        <dbReference type="ChEBI" id="CHEBI:37563"/>
        <note>allosteric inhibitor</note>
    </ligand>
</feature>
<feature type="binding site" evidence="1">
    <location>
        <begin position="187"/>
        <end position="192"/>
    </location>
    <ligand>
        <name>CTP</name>
        <dbReference type="ChEBI" id="CHEBI:37563"/>
        <note>allosteric inhibitor</note>
    </ligand>
</feature>
<feature type="binding site" evidence="1">
    <location>
        <begin position="187"/>
        <end position="192"/>
    </location>
    <ligand>
        <name>UTP</name>
        <dbReference type="ChEBI" id="CHEBI:46398"/>
    </ligand>
</feature>
<feature type="binding site" evidence="1">
    <location>
        <position position="223"/>
    </location>
    <ligand>
        <name>CTP</name>
        <dbReference type="ChEBI" id="CHEBI:37563"/>
        <note>allosteric inhibitor</note>
    </ligand>
</feature>
<feature type="binding site" evidence="1">
    <location>
        <position position="223"/>
    </location>
    <ligand>
        <name>UTP</name>
        <dbReference type="ChEBI" id="CHEBI:46398"/>
    </ligand>
</feature>
<feature type="binding site" evidence="1">
    <location>
        <begin position="239"/>
        <end position="241"/>
    </location>
    <ligand>
        <name>ATP</name>
        <dbReference type="ChEBI" id="CHEBI:30616"/>
    </ligand>
</feature>
<feature type="binding site" evidence="1">
    <location>
        <position position="352"/>
    </location>
    <ligand>
        <name>L-glutamine</name>
        <dbReference type="ChEBI" id="CHEBI:58359"/>
    </ligand>
</feature>
<feature type="binding site" evidence="1">
    <location>
        <begin position="380"/>
        <end position="383"/>
    </location>
    <ligand>
        <name>L-glutamine</name>
        <dbReference type="ChEBI" id="CHEBI:58359"/>
    </ligand>
</feature>
<feature type="binding site" evidence="1">
    <location>
        <position position="403"/>
    </location>
    <ligand>
        <name>L-glutamine</name>
        <dbReference type="ChEBI" id="CHEBI:58359"/>
    </ligand>
</feature>
<feature type="binding site" evidence="1">
    <location>
        <position position="470"/>
    </location>
    <ligand>
        <name>L-glutamine</name>
        <dbReference type="ChEBI" id="CHEBI:58359"/>
    </ligand>
</feature>
<organism>
    <name type="scientific">Klebsiella pneumoniae (strain 342)</name>
    <dbReference type="NCBI Taxonomy" id="507522"/>
    <lineage>
        <taxon>Bacteria</taxon>
        <taxon>Pseudomonadati</taxon>
        <taxon>Pseudomonadota</taxon>
        <taxon>Gammaproteobacteria</taxon>
        <taxon>Enterobacterales</taxon>
        <taxon>Enterobacteriaceae</taxon>
        <taxon>Klebsiella/Raoultella group</taxon>
        <taxon>Klebsiella</taxon>
        <taxon>Klebsiella pneumoniae complex</taxon>
    </lineage>
</organism>
<reference key="1">
    <citation type="journal article" date="2008" name="PLoS Genet.">
        <title>Complete genome sequence of the N2-fixing broad host range endophyte Klebsiella pneumoniae 342 and virulence predictions verified in mice.</title>
        <authorList>
            <person name="Fouts D.E."/>
            <person name="Tyler H.L."/>
            <person name="DeBoy R.T."/>
            <person name="Daugherty S."/>
            <person name="Ren Q."/>
            <person name="Badger J.H."/>
            <person name="Durkin A.S."/>
            <person name="Huot H."/>
            <person name="Shrivastava S."/>
            <person name="Kothari S."/>
            <person name="Dodson R.J."/>
            <person name="Mohamoud Y."/>
            <person name="Khouri H."/>
            <person name="Roesch L.F.W."/>
            <person name="Krogfelt K.A."/>
            <person name="Struve C."/>
            <person name="Triplett E.W."/>
            <person name="Methe B.A."/>
        </authorList>
    </citation>
    <scope>NUCLEOTIDE SEQUENCE [LARGE SCALE GENOMIC DNA]</scope>
    <source>
        <strain>342</strain>
    </source>
</reference>
<dbReference type="EC" id="6.3.4.2" evidence="1"/>
<dbReference type="EMBL" id="CP000964">
    <property type="protein sequence ID" value="ACI09005.1"/>
    <property type="molecule type" value="Genomic_DNA"/>
</dbReference>
<dbReference type="SMR" id="B5XV18"/>
<dbReference type="MEROPS" id="C26.964"/>
<dbReference type="KEGG" id="kpe:KPK_0998"/>
<dbReference type="HOGENOM" id="CLU_011675_5_0_6"/>
<dbReference type="UniPathway" id="UPA00159">
    <property type="reaction ID" value="UER00277"/>
</dbReference>
<dbReference type="Proteomes" id="UP000001734">
    <property type="component" value="Chromosome"/>
</dbReference>
<dbReference type="GO" id="GO:0005829">
    <property type="term" value="C:cytosol"/>
    <property type="evidence" value="ECO:0007669"/>
    <property type="project" value="TreeGrafter"/>
</dbReference>
<dbReference type="GO" id="GO:0005524">
    <property type="term" value="F:ATP binding"/>
    <property type="evidence" value="ECO:0007669"/>
    <property type="project" value="UniProtKB-KW"/>
</dbReference>
<dbReference type="GO" id="GO:0003883">
    <property type="term" value="F:CTP synthase activity"/>
    <property type="evidence" value="ECO:0007669"/>
    <property type="project" value="UniProtKB-UniRule"/>
</dbReference>
<dbReference type="GO" id="GO:0004359">
    <property type="term" value="F:glutaminase activity"/>
    <property type="evidence" value="ECO:0007669"/>
    <property type="project" value="RHEA"/>
</dbReference>
<dbReference type="GO" id="GO:0042802">
    <property type="term" value="F:identical protein binding"/>
    <property type="evidence" value="ECO:0007669"/>
    <property type="project" value="TreeGrafter"/>
</dbReference>
<dbReference type="GO" id="GO:0046872">
    <property type="term" value="F:metal ion binding"/>
    <property type="evidence" value="ECO:0007669"/>
    <property type="project" value="UniProtKB-KW"/>
</dbReference>
<dbReference type="GO" id="GO:0044210">
    <property type="term" value="P:'de novo' CTP biosynthetic process"/>
    <property type="evidence" value="ECO:0007669"/>
    <property type="project" value="UniProtKB-UniRule"/>
</dbReference>
<dbReference type="GO" id="GO:0019856">
    <property type="term" value="P:pyrimidine nucleobase biosynthetic process"/>
    <property type="evidence" value="ECO:0007669"/>
    <property type="project" value="TreeGrafter"/>
</dbReference>
<dbReference type="CDD" id="cd03113">
    <property type="entry name" value="CTPS_N"/>
    <property type="match status" value="1"/>
</dbReference>
<dbReference type="CDD" id="cd01746">
    <property type="entry name" value="GATase1_CTP_Synthase"/>
    <property type="match status" value="1"/>
</dbReference>
<dbReference type="FunFam" id="3.40.50.300:FF:000009">
    <property type="entry name" value="CTP synthase"/>
    <property type="match status" value="1"/>
</dbReference>
<dbReference type="FunFam" id="3.40.50.880:FF:000002">
    <property type="entry name" value="CTP synthase"/>
    <property type="match status" value="1"/>
</dbReference>
<dbReference type="Gene3D" id="3.40.50.880">
    <property type="match status" value="1"/>
</dbReference>
<dbReference type="Gene3D" id="3.40.50.300">
    <property type="entry name" value="P-loop containing nucleotide triphosphate hydrolases"/>
    <property type="match status" value="1"/>
</dbReference>
<dbReference type="HAMAP" id="MF_01227">
    <property type="entry name" value="PyrG"/>
    <property type="match status" value="1"/>
</dbReference>
<dbReference type="InterPro" id="IPR029062">
    <property type="entry name" value="Class_I_gatase-like"/>
</dbReference>
<dbReference type="InterPro" id="IPR004468">
    <property type="entry name" value="CTP_synthase"/>
</dbReference>
<dbReference type="InterPro" id="IPR017456">
    <property type="entry name" value="CTP_synthase_N"/>
</dbReference>
<dbReference type="InterPro" id="IPR017926">
    <property type="entry name" value="GATASE"/>
</dbReference>
<dbReference type="InterPro" id="IPR033828">
    <property type="entry name" value="GATase1_CTP_Synthase"/>
</dbReference>
<dbReference type="InterPro" id="IPR027417">
    <property type="entry name" value="P-loop_NTPase"/>
</dbReference>
<dbReference type="NCBIfam" id="NF003792">
    <property type="entry name" value="PRK05380.1"/>
    <property type="match status" value="1"/>
</dbReference>
<dbReference type="NCBIfam" id="TIGR00337">
    <property type="entry name" value="PyrG"/>
    <property type="match status" value="1"/>
</dbReference>
<dbReference type="PANTHER" id="PTHR11550">
    <property type="entry name" value="CTP SYNTHASE"/>
    <property type="match status" value="1"/>
</dbReference>
<dbReference type="PANTHER" id="PTHR11550:SF0">
    <property type="entry name" value="CTP SYNTHASE-RELATED"/>
    <property type="match status" value="1"/>
</dbReference>
<dbReference type="Pfam" id="PF06418">
    <property type="entry name" value="CTP_synth_N"/>
    <property type="match status" value="1"/>
</dbReference>
<dbReference type="Pfam" id="PF00117">
    <property type="entry name" value="GATase"/>
    <property type="match status" value="1"/>
</dbReference>
<dbReference type="SUPFAM" id="SSF52317">
    <property type="entry name" value="Class I glutamine amidotransferase-like"/>
    <property type="match status" value="1"/>
</dbReference>
<dbReference type="SUPFAM" id="SSF52540">
    <property type="entry name" value="P-loop containing nucleoside triphosphate hydrolases"/>
    <property type="match status" value="1"/>
</dbReference>
<dbReference type="PROSITE" id="PS51273">
    <property type="entry name" value="GATASE_TYPE_1"/>
    <property type="match status" value="1"/>
</dbReference>
<proteinExistence type="inferred from homology"/>
<evidence type="ECO:0000255" key="1">
    <source>
        <dbReference type="HAMAP-Rule" id="MF_01227"/>
    </source>
</evidence>